<proteinExistence type="inferred from homology"/>
<gene>
    <name evidence="1" type="primary">L1</name>
</gene>
<name>VL1_HPV53</name>
<comment type="function">
    <text evidence="1">Forms an icosahedral capsid with a T=7 symmetry and a 50 nm diameter. The capsid is composed of 72 pentamers linked to each other by disulfide bonds and associated with L2 proteins. Binds to heparan sulfate proteoglycans on cell surface of basal layer keratinocytes to provide initial virion attachment. This binding mediates a conformational change in the virus capsid that facilitates efficient infection. The virion enters the host cell via endocytosis. During virus trafficking, L1 protein dissociates from the viral DNA and the genomic DNA is released to the host nucleus. The virion assembly takes place within the cell nucleus. Encapsulates the genomic DNA together with protein L2.</text>
</comment>
<comment type="subunit">
    <text evidence="1">Self-assembles into homopentamers. The capsid has an icosahedral symmetry and consists of 72 capsomers, with each capsomer being a pentamer of L1. Interacts with the minor capsid protein L2; this interaction is necessary for viral genome encapsidation. Interacts with protein E2; this interaction enhances E2-dependent replication and transcription activation.</text>
</comment>
<comment type="subcellular location">
    <subcellularLocation>
        <location evidence="1">Virion</location>
    </subcellularLocation>
    <subcellularLocation>
        <location evidence="1">Host nucleus</location>
    </subcellularLocation>
</comment>
<comment type="similarity">
    <text evidence="1">Belongs to the papillomaviridae L1 protein family.</text>
</comment>
<evidence type="ECO:0000255" key="1">
    <source>
        <dbReference type="HAMAP-Rule" id="MF_04002"/>
    </source>
</evidence>
<evidence type="ECO:0000256" key="2">
    <source>
        <dbReference type="SAM" id="MobiDB-lite"/>
    </source>
</evidence>
<feature type="chain" id="PRO_0000133536" description="Major capsid protein L1">
    <location>
        <begin position="1"/>
        <end position="499"/>
    </location>
</feature>
<feature type="region of interest" description="Disordered" evidence="2">
    <location>
        <begin position="472"/>
        <end position="499"/>
    </location>
</feature>
<feature type="compositionally biased region" description="Low complexity" evidence="2">
    <location>
        <begin position="484"/>
        <end position="493"/>
    </location>
</feature>
<feature type="disulfide bond" description="Interchain (with C-425)" evidence="1">
    <location>
        <position position="173"/>
    </location>
</feature>
<feature type="disulfide bond" description="Interchain (with C-173)" evidence="1">
    <location>
        <position position="425"/>
    </location>
</feature>
<dbReference type="EMBL" id="X74482">
    <property type="protein sequence ID" value="CAA52595.1"/>
    <property type="molecule type" value="Genomic_DNA"/>
</dbReference>
<dbReference type="EMBL" id="M96298">
    <property type="protein sequence ID" value="AAA47037.1"/>
    <property type="molecule type" value="Genomic_DNA"/>
</dbReference>
<dbReference type="PIR" id="S36531">
    <property type="entry name" value="S36531"/>
</dbReference>
<dbReference type="RefSeq" id="NP_041848.1">
    <property type="nucleotide sequence ID" value="NC_001593.1"/>
</dbReference>
<dbReference type="SMR" id="Q05113"/>
<dbReference type="GeneID" id="1489468"/>
<dbReference type="KEGG" id="vg:1489468"/>
<dbReference type="OrthoDB" id="5037at10239"/>
<dbReference type="Proteomes" id="UP000009126">
    <property type="component" value="Genome"/>
</dbReference>
<dbReference type="GO" id="GO:0042025">
    <property type="term" value="C:host cell nucleus"/>
    <property type="evidence" value="ECO:0007669"/>
    <property type="project" value="UniProtKB-SubCell"/>
</dbReference>
<dbReference type="GO" id="GO:0039620">
    <property type="term" value="C:T=7 icosahedral viral capsid"/>
    <property type="evidence" value="ECO:0007669"/>
    <property type="project" value="UniProtKB-UniRule"/>
</dbReference>
<dbReference type="GO" id="GO:0005198">
    <property type="term" value="F:structural molecule activity"/>
    <property type="evidence" value="ECO:0007669"/>
    <property type="project" value="UniProtKB-UniRule"/>
</dbReference>
<dbReference type="GO" id="GO:0075509">
    <property type="term" value="P:endocytosis involved in viral entry into host cell"/>
    <property type="evidence" value="ECO:0007669"/>
    <property type="project" value="UniProtKB-KW"/>
</dbReference>
<dbReference type="GO" id="GO:0019062">
    <property type="term" value="P:virion attachment to host cell"/>
    <property type="evidence" value="ECO:0007669"/>
    <property type="project" value="UniProtKB-UniRule"/>
</dbReference>
<dbReference type="Gene3D" id="2.60.175.20">
    <property type="entry name" value="Major capsid L1 (late) superfamily, Papillomavirus"/>
    <property type="match status" value="2"/>
</dbReference>
<dbReference type="HAMAP" id="MF_04002">
    <property type="entry name" value="PPV_L1"/>
    <property type="match status" value="1"/>
</dbReference>
<dbReference type="InterPro" id="IPR002210">
    <property type="entry name" value="Capsid_L1_Papillomavir"/>
</dbReference>
<dbReference type="InterPro" id="IPR036973">
    <property type="entry name" value="Capsid_L1_sf_Papillomavir"/>
</dbReference>
<dbReference type="InterPro" id="IPR011222">
    <property type="entry name" value="dsDNA_vir_gr_I_capsid"/>
</dbReference>
<dbReference type="Pfam" id="PF00500">
    <property type="entry name" value="Late_protein_L1"/>
    <property type="match status" value="1"/>
</dbReference>
<dbReference type="PRINTS" id="PR00865">
    <property type="entry name" value="HPVCAPSIDL1"/>
</dbReference>
<dbReference type="SUPFAM" id="SSF88648">
    <property type="entry name" value="Group I dsDNA viruses"/>
    <property type="match status" value="1"/>
</dbReference>
<sequence length="499" mass="55722">MAVWRPSDSKVYLPPTPVSKVITTDAYVKRTTIFYHAGSSRLLTVGHPYYPISKSGKADIPKVSAFQYRVFRVRLPDPNKFGLPDTNIFNPDQERLVWACVGLEIGRGQPLGVGVSGHPLFNRLDDTESSSIAIQDTAPDSRDNVSVDPKQTQLCIIGCAPAIGEHWTKGTACRSTPTTAGDCPPLELINSPIEDGDMVDTGFGALNFKALQESKSDVPLDIVQSTCKYPDYLKMSADAYGDSMWFYLRREQLFTRHFFNRAGVIGEEIPNDLYIKGSNGRDPPPSSVYVATPSGSMITSEAQLFNKPYWLQRAQGHNNGICWNNQLFVTVVDTTRNTNMTLSATTQSMSTYNSKQIKQYVRHAEEYELQFVFQLCKISLSAEVMAYLHTMNSTLLEDWNIGLSPPVATSLEDKYRYVKSAAITCQKDQPPPEKQDPLSKYKFWEVNLQNSFSADLDQFPLGRKFLMQVGVRTKPPVSSKKRSASTTSTSAPSSKRKRK</sequence>
<accession>Q05113</accession>
<organismHost>
    <name type="scientific">Homo sapiens</name>
    <name type="common">Human</name>
    <dbReference type="NCBI Taxonomy" id="9606"/>
</organismHost>
<keyword id="KW-0167">Capsid protein</keyword>
<keyword id="KW-1015">Disulfide bond</keyword>
<keyword id="KW-1048">Host nucleus</keyword>
<keyword id="KW-0945">Host-virus interaction</keyword>
<keyword id="KW-0426">Late protein</keyword>
<keyword id="KW-1145">T=7 icosahedral capsid protein</keyword>
<keyword id="KW-1161">Viral attachment to host cell</keyword>
<keyword id="KW-1162">Viral penetration into host cytoplasm</keyword>
<keyword id="KW-0946">Virion</keyword>
<keyword id="KW-1164">Virus endocytosis by host</keyword>
<keyword id="KW-1160">Virus entry into host cell</keyword>
<organism>
    <name type="scientific">Human papillomavirus type 53</name>
    <dbReference type="NCBI Taxonomy" id="333765"/>
    <lineage>
        <taxon>Viruses</taxon>
        <taxon>Monodnaviria</taxon>
        <taxon>Shotokuvirae</taxon>
        <taxon>Cossaviricota</taxon>
        <taxon>Papovaviricetes</taxon>
        <taxon>Zurhausenvirales</taxon>
        <taxon>Papillomaviridae</taxon>
        <taxon>Firstpapillomavirinae</taxon>
        <taxon>Alphapapillomavirus</taxon>
        <taxon>Alphapapillomavirus 6</taxon>
    </lineage>
</organism>
<protein>
    <recommendedName>
        <fullName evidence="1">Major capsid protein L1</fullName>
    </recommendedName>
</protein>
<reference key="1">
    <citation type="journal article" date="1994" name="Curr. Top. Microbiol. Immunol.">
        <title>Primer-directed sequencing of human papillomavirus types.</title>
        <authorList>
            <person name="Delius H."/>
            <person name="Hofmann B."/>
        </authorList>
    </citation>
    <scope>NUCLEOTIDE SEQUENCE [GENOMIC DNA]</scope>
</reference>
<reference key="2">
    <citation type="journal article" date="1992" name="J. Virol.">
        <title>Phylogenetic analysis of 48 papillomavirus types and 28 subtypes and variants: a showcase for the molecular evolution of DNA viruses.</title>
        <authorList>
            <person name="Chan S.-Y."/>
            <person name="Bernard H.U."/>
            <person name="Ong C.K."/>
            <person name="Chan S.P."/>
            <person name="Birgit H."/>
            <person name="Delius H."/>
        </authorList>
    </citation>
    <scope>NUCLEOTIDE SEQUENCE [GENOMIC DNA] OF 300-343</scope>
</reference>